<evidence type="ECO:0000255" key="1">
    <source>
        <dbReference type="HAMAP-Rule" id="MF_00682"/>
    </source>
</evidence>
<evidence type="ECO:0007829" key="2">
    <source>
        <dbReference type="PDB" id="4IT5"/>
    </source>
</evidence>
<name>HSCB_VIBCH</name>
<keyword id="KW-0002">3D-structure</keyword>
<keyword id="KW-0143">Chaperone</keyword>
<keyword id="KW-1185">Reference proteome</keyword>
<feature type="chain" id="PRO_0000070992" description="Co-chaperone protein HscB homolog">
    <location>
        <begin position="1"/>
        <end position="171"/>
    </location>
</feature>
<feature type="domain" description="J" evidence="1">
    <location>
        <begin position="2"/>
        <end position="74"/>
    </location>
</feature>
<feature type="helix" evidence="2">
    <location>
        <begin position="3"/>
        <end position="6"/>
    </location>
</feature>
<feature type="strand" evidence="2">
    <location>
        <begin position="11"/>
        <end position="13"/>
    </location>
</feature>
<feature type="helix" evidence="2">
    <location>
        <begin position="17"/>
        <end position="30"/>
    </location>
</feature>
<feature type="helix" evidence="2">
    <location>
        <begin position="33"/>
        <end position="36"/>
    </location>
</feature>
<feature type="helix" evidence="2">
    <location>
        <begin position="41"/>
        <end position="62"/>
    </location>
</feature>
<feature type="helix" evidence="2">
    <location>
        <begin position="64"/>
        <end position="73"/>
    </location>
</feature>
<feature type="turn" evidence="2">
    <location>
        <begin position="74"/>
        <end position="76"/>
    </location>
</feature>
<feature type="turn" evidence="2">
    <location>
        <begin position="81"/>
        <end position="86"/>
    </location>
</feature>
<feature type="helix" evidence="2">
    <location>
        <begin position="89"/>
        <end position="104"/>
    </location>
</feature>
<feature type="helix" evidence="2">
    <location>
        <begin position="105"/>
        <end position="107"/>
    </location>
</feature>
<feature type="strand" evidence="2">
    <location>
        <begin position="108"/>
        <end position="110"/>
    </location>
</feature>
<feature type="helix" evidence="2">
    <location>
        <begin position="111"/>
        <end position="138"/>
    </location>
</feature>
<feature type="helix" evidence="2">
    <location>
        <begin position="142"/>
        <end position="169"/>
    </location>
</feature>
<protein>
    <recommendedName>
        <fullName evidence="1">Co-chaperone protein HscB homolog</fullName>
    </recommendedName>
</protein>
<accession>Q9KTX9</accession>
<comment type="function">
    <text evidence="1">Co-chaperone involved in the maturation of iron-sulfur cluster-containing proteins. Seems to help targeting proteins to be folded toward HscA.</text>
</comment>
<comment type="subunit">
    <text evidence="1">Interacts with HscA and stimulates its ATPase activity.</text>
</comment>
<comment type="similarity">
    <text evidence="1">Belongs to the HscB family.</text>
</comment>
<proteinExistence type="evidence at protein level"/>
<gene>
    <name evidence="1" type="primary">hscB</name>
    <name type="ordered locus">VC_0751</name>
</gene>
<sequence>MNYFELFGLPIQFELDGSLLSSQFRALQKRFHPDNFATASERDRLMAVQQAAQINDAYQTLKDPLRRAEYLLSLQGIEMNAEQQTLQDPMFLMEQMELREELESVTACADPEAALVAFDTKVTAMQRHYLAQLQGQLAQSEWLAAADQIRKLKFIAKLKNEVERVEDQLLG</sequence>
<dbReference type="EMBL" id="AE003852">
    <property type="protein sequence ID" value="AAF93916.1"/>
    <property type="molecule type" value="Genomic_DNA"/>
</dbReference>
<dbReference type="PIR" id="B82286">
    <property type="entry name" value="B82286"/>
</dbReference>
<dbReference type="RefSeq" id="NP_230400.1">
    <property type="nucleotide sequence ID" value="NC_002505.1"/>
</dbReference>
<dbReference type="RefSeq" id="WP_001105747.1">
    <property type="nucleotide sequence ID" value="NZ_LT906614.1"/>
</dbReference>
<dbReference type="PDB" id="4IT5">
    <property type="method" value="X-ray"/>
    <property type="resolution" value="2.15 A"/>
    <property type="chains" value="A/B/C/D=1-171"/>
</dbReference>
<dbReference type="PDBsum" id="4IT5"/>
<dbReference type="SMR" id="Q9KTX9"/>
<dbReference type="STRING" id="243277.VC_0751"/>
<dbReference type="DNASU" id="2615760"/>
<dbReference type="EnsemblBacteria" id="AAF93916">
    <property type="protein sequence ID" value="AAF93916"/>
    <property type="gene ID" value="VC_0751"/>
</dbReference>
<dbReference type="KEGG" id="vch:VC_0751"/>
<dbReference type="PATRIC" id="fig|243277.26.peg.715"/>
<dbReference type="eggNOG" id="COG1076">
    <property type="taxonomic scope" value="Bacteria"/>
</dbReference>
<dbReference type="HOGENOM" id="CLU_068529_2_0_6"/>
<dbReference type="EvolutionaryTrace" id="Q9KTX9"/>
<dbReference type="Proteomes" id="UP000000584">
    <property type="component" value="Chromosome 1"/>
</dbReference>
<dbReference type="GO" id="GO:1990230">
    <property type="term" value="C:iron-sulfur cluster transfer complex"/>
    <property type="evidence" value="ECO:0000318"/>
    <property type="project" value="GO_Central"/>
</dbReference>
<dbReference type="GO" id="GO:0001671">
    <property type="term" value="F:ATPase activator activity"/>
    <property type="evidence" value="ECO:0007669"/>
    <property type="project" value="InterPro"/>
</dbReference>
<dbReference type="GO" id="GO:0051087">
    <property type="term" value="F:protein-folding chaperone binding"/>
    <property type="evidence" value="ECO:0007669"/>
    <property type="project" value="InterPro"/>
</dbReference>
<dbReference type="GO" id="GO:0044571">
    <property type="term" value="P:[2Fe-2S] cluster assembly"/>
    <property type="evidence" value="ECO:0007669"/>
    <property type="project" value="InterPro"/>
</dbReference>
<dbReference type="GO" id="GO:0051259">
    <property type="term" value="P:protein complex oligomerization"/>
    <property type="evidence" value="ECO:0007669"/>
    <property type="project" value="InterPro"/>
</dbReference>
<dbReference type="GO" id="GO:0006457">
    <property type="term" value="P:protein folding"/>
    <property type="evidence" value="ECO:0007669"/>
    <property type="project" value="UniProtKB-UniRule"/>
</dbReference>
<dbReference type="CDD" id="cd06257">
    <property type="entry name" value="DnaJ"/>
    <property type="match status" value="1"/>
</dbReference>
<dbReference type="FunFam" id="1.10.287.110:FF:000008">
    <property type="entry name" value="Co-chaperone protein HscB"/>
    <property type="match status" value="1"/>
</dbReference>
<dbReference type="Gene3D" id="1.10.287.110">
    <property type="entry name" value="DnaJ domain"/>
    <property type="match status" value="1"/>
</dbReference>
<dbReference type="Gene3D" id="1.20.1280.20">
    <property type="entry name" value="HscB, C-terminal domain"/>
    <property type="match status" value="1"/>
</dbReference>
<dbReference type="HAMAP" id="MF_00682">
    <property type="entry name" value="HscB"/>
    <property type="match status" value="1"/>
</dbReference>
<dbReference type="InterPro" id="IPR001623">
    <property type="entry name" value="DnaJ_domain"/>
</dbReference>
<dbReference type="InterPro" id="IPR004640">
    <property type="entry name" value="HscB"/>
</dbReference>
<dbReference type="InterPro" id="IPR036386">
    <property type="entry name" value="HscB_C_sf"/>
</dbReference>
<dbReference type="InterPro" id="IPR009073">
    <property type="entry name" value="HscB_oligo_C"/>
</dbReference>
<dbReference type="InterPro" id="IPR036869">
    <property type="entry name" value="J_dom_sf"/>
</dbReference>
<dbReference type="NCBIfam" id="TIGR00714">
    <property type="entry name" value="hscB"/>
    <property type="match status" value="1"/>
</dbReference>
<dbReference type="NCBIfam" id="NF003449">
    <property type="entry name" value="PRK05014.1"/>
    <property type="match status" value="1"/>
</dbReference>
<dbReference type="PANTHER" id="PTHR14021">
    <property type="entry name" value="IRON-SULFUR CLUSTER CO-CHAPERONE PROTEIN HSCB"/>
    <property type="match status" value="1"/>
</dbReference>
<dbReference type="PANTHER" id="PTHR14021:SF15">
    <property type="entry name" value="IRON-SULFUR CLUSTER CO-CHAPERONE PROTEIN HSCB"/>
    <property type="match status" value="1"/>
</dbReference>
<dbReference type="Pfam" id="PF00226">
    <property type="entry name" value="DnaJ"/>
    <property type="match status" value="1"/>
</dbReference>
<dbReference type="Pfam" id="PF07743">
    <property type="entry name" value="HSCB_C"/>
    <property type="match status" value="1"/>
</dbReference>
<dbReference type="SMART" id="SM00271">
    <property type="entry name" value="DnaJ"/>
    <property type="match status" value="1"/>
</dbReference>
<dbReference type="SUPFAM" id="SSF46565">
    <property type="entry name" value="Chaperone J-domain"/>
    <property type="match status" value="1"/>
</dbReference>
<dbReference type="SUPFAM" id="SSF47144">
    <property type="entry name" value="HSC20 (HSCB), C-terminal oligomerisation domain"/>
    <property type="match status" value="1"/>
</dbReference>
<dbReference type="PROSITE" id="PS50076">
    <property type="entry name" value="DNAJ_2"/>
    <property type="match status" value="1"/>
</dbReference>
<organism>
    <name type="scientific">Vibrio cholerae serotype O1 (strain ATCC 39315 / El Tor Inaba N16961)</name>
    <dbReference type="NCBI Taxonomy" id="243277"/>
    <lineage>
        <taxon>Bacteria</taxon>
        <taxon>Pseudomonadati</taxon>
        <taxon>Pseudomonadota</taxon>
        <taxon>Gammaproteobacteria</taxon>
        <taxon>Vibrionales</taxon>
        <taxon>Vibrionaceae</taxon>
        <taxon>Vibrio</taxon>
    </lineage>
</organism>
<reference key="1">
    <citation type="journal article" date="2000" name="Nature">
        <title>DNA sequence of both chromosomes of the cholera pathogen Vibrio cholerae.</title>
        <authorList>
            <person name="Heidelberg J.F."/>
            <person name="Eisen J.A."/>
            <person name="Nelson W.C."/>
            <person name="Clayton R.A."/>
            <person name="Gwinn M.L."/>
            <person name="Dodson R.J."/>
            <person name="Haft D.H."/>
            <person name="Hickey E.K."/>
            <person name="Peterson J.D."/>
            <person name="Umayam L.A."/>
            <person name="Gill S.R."/>
            <person name="Nelson K.E."/>
            <person name="Read T.D."/>
            <person name="Tettelin H."/>
            <person name="Richardson D.L."/>
            <person name="Ermolaeva M.D."/>
            <person name="Vamathevan J.J."/>
            <person name="Bass S."/>
            <person name="Qin H."/>
            <person name="Dragoi I."/>
            <person name="Sellers P."/>
            <person name="McDonald L.A."/>
            <person name="Utterback T.R."/>
            <person name="Fleischmann R.D."/>
            <person name="Nierman W.C."/>
            <person name="White O."/>
            <person name="Salzberg S.L."/>
            <person name="Smith H.O."/>
            <person name="Colwell R.R."/>
            <person name="Mekalanos J.J."/>
            <person name="Venter J.C."/>
            <person name="Fraser C.M."/>
        </authorList>
    </citation>
    <scope>NUCLEOTIDE SEQUENCE [LARGE SCALE GENOMIC DNA]</scope>
    <source>
        <strain>ATCC 39315 / El Tor Inaba N16961</strain>
    </source>
</reference>